<dbReference type="EC" id="3.1.26.4" evidence="1"/>
<dbReference type="EMBL" id="CP000608">
    <property type="protein sequence ID" value="ABO46947.1"/>
    <property type="molecule type" value="Genomic_DNA"/>
</dbReference>
<dbReference type="RefSeq" id="WP_003015471.1">
    <property type="nucleotide sequence ID" value="NC_009257.1"/>
</dbReference>
<dbReference type="SMR" id="A4IYE6"/>
<dbReference type="GeneID" id="75265176"/>
<dbReference type="KEGG" id="ftw:FTW_1139"/>
<dbReference type="HOGENOM" id="CLU_030894_6_0_6"/>
<dbReference type="GO" id="GO:0005737">
    <property type="term" value="C:cytoplasm"/>
    <property type="evidence" value="ECO:0007669"/>
    <property type="project" value="UniProtKB-SubCell"/>
</dbReference>
<dbReference type="GO" id="GO:0000287">
    <property type="term" value="F:magnesium ion binding"/>
    <property type="evidence" value="ECO:0007669"/>
    <property type="project" value="UniProtKB-UniRule"/>
</dbReference>
<dbReference type="GO" id="GO:0003676">
    <property type="term" value="F:nucleic acid binding"/>
    <property type="evidence" value="ECO:0007669"/>
    <property type="project" value="InterPro"/>
</dbReference>
<dbReference type="GO" id="GO:0004523">
    <property type="term" value="F:RNA-DNA hybrid ribonuclease activity"/>
    <property type="evidence" value="ECO:0007669"/>
    <property type="project" value="UniProtKB-UniRule"/>
</dbReference>
<dbReference type="GO" id="GO:0043137">
    <property type="term" value="P:DNA replication, removal of RNA primer"/>
    <property type="evidence" value="ECO:0007669"/>
    <property type="project" value="TreeGrafter"/>
</dbReference>
<dbReference type="CDD" id="cd09278">
    <property type="entry name" value="RNase_HI_prokaryote_like"/>
    <property type="match status" value="1"/>
</dbReference>
<dbReference type="FunFam" id="3.30.420.10:FF:000089">
    <property type="entry name" value="Ribonuclease H"/>
    <property type="match status" value="1"/>
</dbReference>
<dbReference type="Gene3D" id="3.30.420.10">
    <property type="entry name" value="Ribonuclease H-like superfamily/Ribonuclease H"/>
    <property type="match status" value="1"/>
</dbReference>
<dbReference type="HAMAP" id="MF_00042">
    <property type="entry name" value="RNase_H"/>
    <property type="match status" value="1"/>
</dbReference>
<dbReference type="InterPro" id="IPR050092">
    <property type="entry name" value="RNase_H"/>
</dbReference>
<dbReference type="InterPro" id="IPR012337">
    <property type="entry name" value="RNaseH-like_sf"/>
</dbReference>
<dbReference type="InterPro" id="IPR002156">
    <property type="entry name" value="RNaseH_domain"/>
</dbReference>
<dbReference type="InterPro" id="IPR036397">
    <property type="entry name" value="RNaseH_sf"/>
</dbReference>
<dbReference type="InterPro" id="IPR022892">
    <property type="entry name" value="RNaseHI"/>
</dbReference>
<dbReference type="NCBIfam" id="NF001236">
    <property type="entry name" value="PRK00203.1"/>
    <property type="match status" value="1"/>
</dbReference>
<dbReference type="PANTHER" id="PTHR10642">
    <property type="entry name" value="RIBONUCLEASE H1"/>
    <property type="match status" value="1"/>
</dbReference>
<dbReference type="PANTHER" id="PTHR10642:SF26">
    <property type="entry name" value="RIBONUCLEASE H1"/>
    <property type="match status" value="1"/>
</dbReference>
<dbReference type="Pfam" id="PF00075">
    <property type="entry name" value="RNase_H"/>
    <property type="match status" value="1"/>
</dbReference>
<dbReference type="SUPFAM" id="SSF53098">
    <property type="entry name" value="Ribonuclease H-like"/>
    <property type="match status" value="1"/>
</dbReference>
<dbReference type="PROSITE" id="PS50879">
    <property type="entry name" value="RNASE_H_1"/>
    <property type="match status" value="1"/>
</dbReference>
<name>RNH_FRATW</name>
<gene>
    <name evidence="1" type="primary">rnhA</name>
    <name type="ordered locus">FTW_1139</name>
</gene>
<accession>A4IYE6</accession>
<keyword id="KW-0963">Cytoplasm</keyword>
<keyword id="KW-0255">Endonuclease</keyword>
<keyword id="KW-0378">Hydrolase</keyword>
<keyword id="KW-0460">Magnesium</keyword>
<keyword id="KW-0479">Metal-binding</keyword>
<keyword id="KW-0540">Nuclease</keyword>
<sequence>MEIFKKKNRVIAYTDGACKGNPGIGGWGAILSYNGVDKEIYGSEKDTTNNRMELMAAIKTLQALKRKCDITIYTDSKYLQNGINEWLANWKANGWKTAAKKEVKNKDLWQELDSLTNKHNVTWGWVKGHSGNAGNEKADELANKAIAELIGK</sequence>
<protein>
    <recommendedName>
        <fullName evidence="1">Ribonuclease H</fullName>
        <shortName evidence="1">RNase H</shortName>
        <ecNumber evidence="1">3.1.26.4</ecNumber>
    </recommendedName>
</protein>
<proteinExistence type="inferred from homology"/>
<comment type="function">
    <text evidence="1">Endonuclease that specifically degrades the RNA of RNA-DNA hybrids.</text>
</comment>
<comment type="catalytic activity">
    <reaction evidence="1">
        <text>Endonucleolytic cleavage to 5'-phosphomonoester.</text>
        <dbReference type="EC" id="3.1.26.4"/>
    </reaction>
</comment>
<comment type="cofactor">
    <cofactor evidence="1">
        <name>Mg(2+)</name>
        <dbReference type="ChEBI" id="CHEBI:18420"/>
    </cofactor>
    <text evidence="1">Binds 1 Mg(2+) ion per subunit. May bind a second metal ion at a regulatory site, or after substrate binding.</text>
</comment>
<comment type="subunit">
    <text evidence="1">Monomer.</text>
</comment>
<comment type="subcellular location">
    <subcellularLocation>
        <location evidence="1">Cytoplasm</location>
    </subcellularLocation>
</comment>
<comment type="similarity">
    <text evidence="1">Belongs to the RNase H family.</text>
</comment>
<reference key="1">
    <citation type="journal article" date="2007" name="PLoS ONE">
        <title>Complete genomic characterization of a pathogenic A.II strain of Francisella tularensis subspecies tularensis.</title>
        <authorList>
            <person name="Beckstrom-Sternberg S.M."/>
            <person name="Auerbach R.K."/>
            <person name="Godbole S."/>
            <person name="Pearson J.V."/>
            <person name="Beckstrom-Sternberg J.S."/>
            <person name="Deng Z."/>
            <person name="Munk C."/>
            <person name="Kubota K."/>
            <person name="Zhou Y."/>
            <person name="Bruce D."/>
            <person name="Noronha J."/>
            <person name="Scheuermann R.H."/>
            <person name="Wang A."/>
            <person name="Wei X."/>
            <person name="Wang J."/>
            <person name="Hao J."/>
            <person name="Wagner D.M."/>
            <person name="Brettin T.S."/>
            <person name="Brown N."/>
            <person name="Gilna P."/>
            <person name="Keim P.S."/>
        </authorList>
    </citation>
    <scope>NUCLEOTIDE SEQUENCE [LARGE SCALE GENOMIC DNA]</scope>
    <source>
        <strain>WY96-3418</strain>
    </source>
</reference>
<organism>
    <name type="scientific">Francisella tularensis subsp. tularensis (strain WY96-3418)</name>
    <dbReference type="NCBI Taxonomy" id="418136"/>
    <lineage>
        <taxon>Bacteria</taxon>
        <taxon>Pseudomonadati</taxon>
        <taxon>Pseudomonadota</taxon>
        <taxon>Gammaproteobacteria</taxon>
        <taxon>Thiotrichales</taxon>
        <taxon>Francisellaceae</taxon>
        <taxon>Francisella</taxon>
    </lineage>
</organism>
<evidence type="ECO:0000255" key="1">
    <source>
        <dbReference type="HAMAP-Rule" id="MF_00042"/>
    </source>
</evidence>
<evidence type="ECO:0000255" key="2">
    <source>
        <dbReference type="PROSITE-ProRule" id="PRU00408"/>
    </source>
</evidence>
<feature type="chain" id="PRO_0000332603" description="Ribonuclease H">
    <location>
        <begin position="1"/>
        <end position="152"/>
    </location>
</feature>
<feature type="domain" description="RNase H type-1" evidence="2">
    <location>
        <begin position="6"/>
        <end position="147"/>
    </location>
</feature>
<feature type="binding site" evidence="1">
    <location>
        <position position="15"/>
    </location>
    <ligand>
        <name>Mg(2+)</name>
        <dbReference type="ChEBI" id="CHEBI:18420"/>
        <label>1</label>
    </ligand>
</feature>
<feature type="binding site" evidence="1">
    <location>
        <position position="15"/>
    </location>
    <ligand>
        <name>Mg(2+)</name>
        <dbReference type="ChEBI" id="CHEBI:18420"/>
        <label>2</label>
    </ligand>
</feature>
<feature type="binding site" evidence="1">
    <location>
        <position position="53"/>
    </location>
    <ligand>
        <name>Mg(2+)</name>
        <dbReference type="ChEBI" id="CHEBI:18420"/>
        <label>1</label>
    </ligand>
</feature>
<feature type="binding site" evidence="1">
    <location>
        <position position="75"/>
    </location>
    <ligand>
        <name>Mg(2+)</name>
        <dbReference type="ChEBI" id="CHEBI:18420"/>
        <label>1</label>
    </ligand>
</feature>
<feature type="binding site" evidence="1">
    <location>
        <position position="139"/>
    </location>
    <ligand>
        <name>Mg(2+)</name>
        <dbReference type="ChEBI" id="CHEBI:18420"/>
        <label>2</label>
    </ligand>
</feature>